<name>DRPD_CRAPL</name>
<evidence type="ECO:0000305" key="1"/>
<organism>
    <name type="scientific">Craterostigma plantagineum</name>
    <name type="common">Blue gem</name>
    <name type="synonym">Torenia plantagineum</name>
    <dbReference type="NCBI Taxonomy" id="4153"/>
    <lineage>
        <taxon>Eukaryota</taxon>
        <taxon>Viridiplantae</taxon>
        <taxon>Streptophyta</taxon>
        <taxon>Embryophyta</taxon>
        <taxon>Tracheophyta</taxon>
        <taxon>Spermatophyta</taxon>
        <taxon>Magnoliopsida</taxon>
        <taxon>eudicotyledons</taxon>
        <taxon>Gunneridae</taxon>
        <taxon>Pentapetalae</taxon>
        <taxon>asterids</taxon>
        <taxon>lamiids</taxon>
        <taxon>Lamiales</taxon>
        <taxon>Linderniaceae</taxon>
        <taxon>Craterostigma</taxon>
    </lineage>
</organism>
<feature type="chain" id="PRO_0000221233" description="Desiccation-related protein PCC27-45">
    <location>
        <begin position="1"/>
        <end position="151"/>
    </location>
</feature>
<dbReference type="EMBL" id="M62990">
    <property type="protein sequence ID" value="AAA63615.1"/>
    <property type="molecule type" value="mRNA"/>
</dbReference>
<dbReference type="EMBL" id="X69883">
    <property type="protein sequence ID" value="CAA49510.1"/>
    <property type="molecule type" value="Genomic_DNA"/>
</dbReference>
<dbReference type="PIR" id="S29970">
    <property type="entry name" value="S29970"/>
</dbReference>
<dbReference type="SMR" id="P22241"/>
<dbReference type="GO" id="GO:0005829">
    <property type="term" value="C:cytosol"/>
    <property type="evidence" value="ECO:0007669"/>
    <property type="project" value="TreeGrafter"/>
</dbReference>
<dbReference type="GO" id="GO:0071465">
    <property type="term" value="P:cellular response to desiccation"/>
    <property type="evidence" value="ECO:0000314"/>
    <property type="project" value="CAFA"/>
</dbReference>
<dbReference type="GO" id="GO:1902075">
    <property type="term" value="P:cellular response to salt"/>
    <property type="evidence" value="ECO:0000314"/>
    <property type="project" value="CAFA"/>
</dbReference>
<dbReference type="FunFam" id="2.60.40.1820:FF:000001">
    <property type="entry name" value="Desiccation protectant protein Lea14-like"/>
    <property type="match status" value="1"/>
</dbReference>
<dbReference type="Gene3D" id="2.60.40.1820">
    <property type="match status" value="1"/>
</dbReference>
<dbReference type="InterPro" id="IPR045043">
    <property type="entry name" value="Lea14-like"/>
</dbReference>
<dbReference type="InterPro" id="IPR004864">
    <property type="entry name" value="LEA_2"/>
</dbReference>
<dbReference type="InterPro" id="IPR013990">
    <property type="entry name" value="WHy-dom"/>
</dbReference>
<dbReference type="PANTHER" id="PTHR31459">
    <property type="match status" value="1"/>
</dbReference>
<dbReference type="PANTHER" id="PTHR31459:SF19">
    <property type="entry name" value="DESICCATION-RELATED PROTEIN LEA14-RELATED"/>
    <property type="match status" value="1"/>
</dbReference>
<dbReference type="Pfam" id="PF03168">
    <property type="entry name" value="LEA_2"/>
    <property type="match status" value="1"/>
</dbReference>
<dbReference type="SMART" id="SM00769">
    <property type="entry name" value="WHy"/>
    <property type="match status" value="1"/>
</dbReference>
<dbReference type="SUPFAM" id="SSF117070">
    <property type="entry name" value="LEA14-like"/>
    <property type="match status" value="1"/>
</dbReference>
<protein>
    <recommendedName>
        <fullName>Desiccation-related protein PCC27-45</fullName>
    </recommendedName>
</protein>
<comment type="induction">
    <text>By desiccation (leaves) and by abscisic acid (ABA) (leaves and callus).</text>
</comment>
<comment type="similarity">
    <text evidence="1">Belongs to the LEA type 2 family.</text>
</comment>
<keyword id="KW-0346">Stress response</keyword>
<reference key="1">
    <citation type="journal article" date="1990" name="Plant Physiol.">
        <title>Characterization of five abscisic acid-responsive cDNA clones isolated from the desiccation-tolerant plant Craterostigma plantagineum and their relationship to other water-stress genes.</title>
        <authorList>
            <person name="Piatkowski D."/>
            <person name="Schneider K."/>
            <person name="Salamini F."/>
            <person name="Bartels D."/>
        </authorList>
    </citation>
    <scope>NUCLEOTIDE SEQUENCE</scope>
    <source>
        <tissue>Leaf</tissue>
    </source>
</reference>
<reference key="2">
    <citation type="journal article" date="1993" name="Plant J.">
        <title>Analysis of a desiccation and ABA-responsive promoter isolated from the resurrection plant Craterostigma plantagineum.</title>
        <authorList>
            <person name="Michel D."/>
            <person name="Salamini F."/>
            <person name="Bartels D."/>
            <person name="Dale P."/>
            <person name="Baga M."/>
            <person name="Szalay A."/>
        </authorList>
    </citation>
    <scope>NUCLEOTIDE SEQUENCE</scope>
</reference>
<proteinExistence type="evidence at transcript level"/>
<accession>P22241</accession>
<sequence>MAQLMNKAKNFVAEKVANVEKPKASVEDVDLKDVGRHGITYLTRICVENPYSASIPVGEIKYTLKSAGRVIVSGNIPDPGSLKGNDKTMLEPAIKVPHSALVSLIKDIGADMDIDYVLELGLVVDLPVIGNFTIPLSHKGEMKLPGLSDIF</sequence>